<evidence type="ECO:0000255" key="1">
    <source>
        <dbReference type="HAMAP-Rule" id="MF_00038"/>
    </source>
</evidence>
<comment type="function">
    <text evidence="1">Catalyzes the initial step of the lipid cycle reactions in the biosynthesis of the cell wall peptidoglycan: transfers peptidoglycan precursor phospho-MurNAc-pentapeptide from UDP-MurNAc-pentapeptide onto the lipid carrier undecaprenyl phosphate, yielding undecaprenyl-pyrophosphoryl-MurNAc-pentapeptide, known as lipid I.</text>
</comment>
<comment type="catalytic activity">
    <reaction evidence="1">
        <text>UDP-N-acetyl-alpha-D-muramoyl-L-alanyl-gamma-D-glutamyl-meso-2,6-diaminopimeloyl-D-alanyl-D-alanine + di-trans,octa-cis-undecaprenyl phosphate = di-trans,octa-cis-undecaprenyl diphospho-N-acetyl-alpha-D-muramoyl-L-alanyl-D-glutamyl-meso-2,6-diaminopimeloyl-D-alanyl-D-alanine + UMP</text>
        <dbReference type="Rhea" id="RHEA:28386"/>
        <dbReference type="ChEBI" id="CHEBI:57865"/>
        <dbReference type="ChEBI" id="CHEBI:60392"/>
        <dbReference type="ChEBI" id="CHEBI:61386"/>
        <dbReference type="ChEBI" id="CHEBI:61387"/>
        <dbReference type="EC" id="2.7.8.13"/>
    </reaction>
</comment>
<comment type="cofactor">
    <cofactor evidence="1">
        <name>Mg(2+)</name>
        <dbReference type="ChEBI" id="CHEBI:18420"/>
    </cofactor>
</comment>
<comment type="pathway">
    <text evidence="1">Cell wall biogenesis; peptidoglycan biosynthesis.</text>
</comment>
<comment type="subcellular location">
    <subcellularLocation>
        <location evidence="1">Cell inner membrane</location>
        <topology evidence="1">Multi-pass membrane protein</topology>
    </subcellularLocation>
</comment>
<comment type="similarity">
    <text evidence="1">Belongs to the glycosyltransferase 4 family. MraY subfamily.</text>
</comment>
<name>MRAY_PETMO</name>
<keyword id="KW-0131">Cell cycle</keyword>
<keyword id="KW-0132">Cell division</keyword>
<keyword id="KW-0997">Cell inner membrane</keyword>
<keyword id="KW-1003">Cell membrane</keyword>
<keyword id="KW-0133">Cell shape</keyword>
<keyword id="KW-0961">Cell wall biogenesis/degradation</keyword>
<keyword id="KW-0460">Magnesium</keyword>
<keyword id="KW-0472">Membrane</keyword>
<keyword id="KW-0479">Metal-binding</keyword>
<keyword id="KW-0573">Peptidoglycan synthesis</keyword>
<keyword id="KW-0808">Transferase</keyword>
<keyword id="KW-0812">Transmembrane</keyword>
<keyword id="KW-1133">Transmembrane helix</keyword>
<accession>A9BGS8</accession>
<proteinExistence type="inferred from homology"/>
<protein>
    <recommendedName>
        <fullName evidence="1">Phospho-N-acetylmuramoyl-pentapeptide-transferase</fullName>
        <ecNumber evidence="1">2.7.8.13</ecNumber>
    </recommendedName>
    <alternativeName>
        <fullName evidence="1">UDP-MurNAc-pentapeptide phosphotransferase</fullName>
    </alternativeName>
</protein>
<reference key="1">
    <citation type="submission" date="2007-11" db="EMBL/GenBank/DDBJ databases">
        <title>Complete sequence of Petroga mobilis SJ95.</title>
        <authorList>
            <consortium name="US DOE Joint Genome Institute"/>
            <person name="Copeland A."/>
            <person name="Lucas S."/>
            <person name="Lapidus A."/>
            <person name="Barry K."/>
            <person name="Glavina del Rio T."/>
            <person name="Dalin E."/>
            <person name="Tice H."/>
            <person name="Pitluck S."/>
            <person name="Meincke L."/>
            <person name="Brettin T."/>
            <person name="Bruce D."/>
            <person name="Detter J.C."/>
            <person name="Han C."/>
            <person name="Kuske C.R."/>
            <person name="Schmutz J."/>
            <person name="Larimer F."/>
            <person name="Land M."/>
            <person name="Hauser L."/>
            <person name="Kyrpides N."/>
            <person name="Mikhailova N."/>
            <person name="Noll K."/>
            <person name="Richardson P."/>
        </authorList>
    </citation>
    <scope>NUCLEOTIDE SEQUENCE [LARGE SCALE GENOMIC DNA]</scope>
    <source>
        <strain>DSM 10674 / SJ95</strain>
    </source>
</reference>
<feature type="chain" id="PRO_0000332541" description="Phospho-N-acetylmuramoyl-pentapeptide-transferase">
    <location>
        <begin position="1"/>
        <end position="314"/>
    </location>
</feature>
<feature type="transmembrane region" description="Helical" evidence="1">
    <location>
        <begin position="4"/>
        <end position="24"/>
    </location>
</feature>
<feature type="transmembrane region" description="Helical" evidence="1">
    <location>
        <begin position="52"/>
        <end position="72"/>
    </location>
</feature>
<feature type="transmembrane region" description="Helical" evidence="1">
    <location>
        <begin position="77"/>
        <end position="97"/>
    </location>
</feature>
<feature type="transmembrane region" description="Helical" evidence="1">
    <location>
        <begin position="111"/>
        <end position="131"/>
    </location>
</feature>
<feature type="transmembrane region" description="Helical" evidence="1">
    <location>
        <begin position="146"/>
        <end position="166"/>
    </location>
</feature>
<feature type="transmembrane region" description="Helical" evidence="1">
    <location>
        <begin position="169"/>
        <end position="189"/>
    </location>
</feature>
<feature type="transmembrane region" description="Helical" evidence="1">
    <location>
        <begin position="191"/>
        <end position="211"/>
    </location>
</feature>
<feature type="transmembrane region" description="Helical" evidence="1">
    <location>
        <begin position="219"/>
        <end position="239"/>
    </location>
</feature>
<feature type="transmembrane region" description="Helical" evidence="1">
    <location>
        <begin position="242"/>
        <end position="262"/>
    </location>
</feature>
<feature type="transmembrane region" description="Helical" evidence="1">
    <location>
        <begin position="294"/>
        <end position="314"/>
    </location>
</feature>
<organism>
    <name type="scientific">Petrotoga mobilis (strain DSM 10674 / SJ95)</name>
    <dbReference type="NCBI Taxonomy" id="403833"/>
    <lineage>
        <taxon>Bacteria</taxon>
        <taxon>Thermotogati</taxon>
        <taxon>Thermotogota</taxon>
        <taxon>Thermotogae</taxon>
        <taxon>Petrotogales</taxon>
        <taxon>Petrotogaceae</taxon>
        <taxon>Petrotoga</taxon>
    </lineage>
</organism>
<dbReference type="EC" id="2.7.8.13" evidence="1"/>
<dbReference type="EMBL" id="CP000879">
    <property type="protein sequence ID" value="ABX32509.1"/>
    <property type="molecule type" value="Genomic_DNA"/>
</dbReference>
<dbReference type="SMR" id="A9BGS8"/>
<dbReference type="STRING" id="403833.Pmob_1820"/>
<dbReference type="KEGG" id="pmo:Pmob_1820"/>
<dbReference type="eggNOG" id="COG0472">
    <property type="taxonomic scope" value="Bacteria"/>
</dbReference>
<dbReference type="HOGENOM" id="CLU_023982_0_1_0"/>
<dbReference type="OrthoDB" id="9805475at2"/>
<dbReference type="UniPathway" id="UPA00219"/>
<dbReference type="Proteomes" id="UP000000789">
    <property type="component" value="Chromosome"/>
</dbReference>
<dbReference type="GO" id="GO:0005886">
    <property type="term" value="C:plasma membrane"/>
    <property type="evidence" value="ECO:0007669"/>
    <property type="project" value="UniProtKB-SubCell"/>
</dbReference>
<dbReference type="GO" id="GO:0046872">
    <property type="term" value="F:metal ion binding"/>
    <property type="evidence" value="ECO:0007669"/>
    <property type="project" value="UniProtKB-KW"/>
</dbReference>
<dbReference type="GO" id="GO:0008963">
    <property type="term" value="F:phospho-N-acetylmuramoyl-pentapeptide-transferase activity"/>
    <property type="evidence" value="ECO:0007669"/>
    <property type="project" value="UniProtKB-UniRule"/>
</dbReference>
<dbReference type="GO" id="GO:0051992">
    <property type="term" value="F:UDP-N-acetylmuramoyl-L-alanyl-D-glutamyl-meso-2,6-diaminopimelyl-D-alanyl-D-alanine:undecaprenyl-phosphate transferase activity"/>
    <property type="evidence" value="ECO:0007669"/>
    <property type="project" value="RHEA"/>
</dbReference>
<dbReference type="GO" id="GO:0051301">
    <property type="term" value="P:cell division"/>
    <property type="evidence" value="ECO:0007669"/>
    <property type="project" value="UniProtKB-KW"/>
</dbReference>
<dbReference type="GO" id="GO:0071555">
    <property type="term" value="P:cell wall organization"/>
    <property type="evidence" value="ECO:0007669"/>
    <property type="project" value="UniProtKB-KW"/>
</dbReference>
<dbReference type="GO" id="GO:0009252">
    <property type="term" value="P:peptidoglycan biosynthetic process"/>
    <property type="evidence" value="ECO:0007669"/>
    <property type="project" value="UniProtKB-UniRule"/>
</dbReference>
<dbReference type="GO" id="GO:0008360">
    <property type="term" value="P:regulation of cell shape"/>
    <property type="evidence" value="ECO:0007669"/>
    <property type="project" value="UniProtKB-KW"/>
</dbReference>
<dbReference type="CDD" id="cd06852">
    <property type="entry name" value="GT_MraY"/>
    <property type="match status" value="1"/>
</dbReference>
<dbReference type="HAMAP" id="MF_00038">
    <property type="entry name" value="MraY"/>
    <property type="match status" value="1"/>
</dbReference>
<dbReference type="InterPro" id="IPR000715">
    <property type="entry name" value="Glycosyl_transferase_4"/>
</dbReference>
<dbReference type="InterPro" id="IPR003524">
    <property type="entry name" value="PNAcMuramoyl-5peptid_Trfase"/>
</dbReference>
<dbReference type="InterPro" id="IPR018480">
    <property type="entry name" value="PNAcMuramoyl-5peptid_Trfase_CS"/>
</dbReference>
<dbReference type="NCBIfam" id="TIGR00445">
    <property type="entry name" value="mraY"/>
    <property type="match status" value="1"/>
</dbReference>
<dbReference type="PANTHER" id="PTHR22926">
    <property type="entry name" value="PHOSPHO-N-ACETYLMURAMOYL-PENTAPEPTIDE-TRANSFERASE"/>
    <property type="match status" value="1"/>
</dbReference>
<dbReference type="PANTHER" id="PTHR22926:SF5">
    <property type="entry name" value="PHOSPHO-N-ACETYLMURAMOYL-PENTAPEPTIDE-TRANSFERASE HOMOLOG"/>
    <property type="match status" value="1"/>
</dbReference>
<dbReference type="Pfam" id="PF00953">
    <property type="entry name" value="Glycos_transf_4"/>
    <property type="match status" value="1"/>
</dbReference>
<dbReference type="Pfam" id="PF10555">
    <property type="entry name" value="MraY_sig1"/>
    <property type="match status" value="1"/>
</dbReference>
<dbReference type="PROSITE" id="PS01347">
    <property type="entry name" value="MRAY_1"/>
    <property type="match status" value="1"/>
</dbReference>
<dbReference type="PROSITE" id="PS01348">
    <property type="entry name" value="MRAY_2"/>
    <property type="match status" value="1"/>
</dbReference>
<gene>
    <name evidence="1" type="primary">mraY</name>
    <name type="ordered locus">Pmob_1820</name>
</gene>
<sequence>MERLIFYITLITFIFLLFLYPIFIKWLKKRQFGQYIRKEGPDLHNYKQGTPTMGGILFILAIFFLSLLTYFIQKEDLFLIIGVASLLFGFIGFLDDYLSIKKKDSTGLTAIQKLLLQFLFSIVIVYLISIFNNHSTLKIPFTTKSLDLKFFYPLWGIIYLTGMSNATNLTDGIDGLSGGIYVISALFTALIAGINFNHIPLLILPVIAYLFYNIKPAKIFMGDTGSLALGGILGSLALYYSVELFTILTCFIFISEMFSVIIQVGSFKVRKKRVFLMAPIHHHFELKKWSEERIVLIFWTINILTGIVALGGVL</sequence>